<sequence>MSKLKLHGFNNLTKSLSFCIYDICYAKTADDRDGYIAYIDEQYNANRLTEILSETCSIIGANILNIARQDYDPQGASVTILVSEEPVDPRDVDTSEHPGPLPSAVVAHLDKSHICVHTYPESHPEAGLCTFRADIEVSTCGVISPLKALNYLIHQLESDIVTMDYRVRGFTRDINGVKHFIDHKINSIQNFMSDDMKSLYHMMDVNVYQENIFHTKMMLKDFDLKHYLFNAKPEELSAEEKEQITRLLYKEMQEIYYGRNVPEV</sequence>
<keyword id="KW-0068">Autocatalytic cleavage</keyword>
<keyword id="KW-0210">Decarboxylase</keyword>
<keyword id="KW-0456">Lyase</keyword>
<keyword id="KW-0620">Polyamine biosynthesis</keyword>
<keyword id="KW-0670">Pyruvate</keyword>
<keyword id="KW-0949">S-adenosyl-L-methionine</keyword>
<keyword id="KW-0704">Schiff base</keyword>
<keyword id="KW-0745">Spermidine biosynthesis</keyword>
<keyword id="KW-0865">Zymogen</keyword>
<comment type="function">
    <text evidence="1">Catalyzes the decarboxylation of S-adenosylmethionine to S-adenosylmethioninamine (dcAdoMet), the propylamine donor required for the synthesis of the polyamines spermine and spermidine from the diamine putrescine.</text>
</comment>
<comment type="catalytic activity">
    <reaction evidence="1">
        <text>S-adenosyl-L-methionine + H(+) = S-adenosyl 3-(methylsulfanyl)propylamine + CO2</text>
        <dbReference type="Rhea" id="RHEA:15981"/>
        <dbReference type="ChEBI" id="CHEBI:15378"/>
        <dbReference type="ChEBI" id="CHEBI:16526"/>
        <dbReference type="ChEBI" id="CHEBI:57443"/>
        <dbReference type="ChEBI" id="CHEBI:59789"/>
        <dbReference type="EC" id="4.1.1.50"/>
    </reaction>
</comment>
<comment type="cofactor">
    <cofactor evidence="1">
        <name>pyruvate</name>
        <dbReference type="ChEBI" id="CHEBI:15361"/>
    </cofactor>
    <text evidence="1">Binds 1 pyruvoyl group covalently per subunit.</text>
</comment>
<comment type="pathway">
    <text evidence="1">Amine and polyamine biosynthesis; S-adenosylmethioninamine biosynthesis; S-adenosylmethioninamine from S-adenosyl-L-methionine: step 1/1.</text>
</comment>
<comment type="subunit">
    <text evidence="1">Heterooctamer of four alpha and four beta chains arranged as a tetramer of alpha/beta heterodimers.</text>
</comment>
<comment type="PTM">
    <text evidence="1">Is synthesized initially as an inactive proenzyme. Formation of the active enzyme involves a self-maturation process in which the active site pyruvoyl group is generated from an internal serine residue via an autocatalytic post-translational modification. Two non-identical subunits are generated from the proenzyme in this reaction, and the pyruvate is formed at the N-terminus of the alpha chain, which is derived from the carboxyl end of the proenzyme. The post-translation cleavage follows an unusual pathway, termed non-hydrolytic serinolysis, in which the side chain hydroxyl group of the serine supplies its oxygen atom to form the C-terminus of the beta chain, while the remainder of the serine residue undergoes an oxidative deamination to produce ammonia and the pyruvoyl group blocking the N-terminus of the alpha chain.</text>
</comment>
<comment type="similarity">
    <text evidence="1">Belongs to the prokaryotic AdoMetDC family. Type 2 subfamily.</text>
</comment>
<dbReference type="EC" id="4.1.1.50" evidence="1"/>
<dbReference type="EMBL" id="CP000720">
    <property type="protein sequence ID" value="ABS49417.1"/>
    <property type="molecule type" value="Genomic_DNA"/>
</dbReference>
<dbReference type="RefSeq" id="WP_002209337.1">
    <property type="nucleotide sequence ID" value="NC_009708.1"/>
</dbReference>
<dbReference type="SMR" id="A7FM34"/>
<dbReference type="GeneID" id="57975297"/>
<dbReference type="KEGG" id="ypi:YpsIP31758_3355"/>
<dbReference type="HOGENOM" id="CLU_092007_0_0_6"/>
<dbReference type="UniPathway" id="UPA00331">
    <property type="reaction ID" value="UER00451"/>
</dbReference>
<dbReference type="Proteomes" id="UP000002412">
    <property type="component" value="Chromosome"/>
</dbReference>
<dbReference type="GO" id="GO:0005829">
    <property type="term" value="C:cytosol"/>
    <property type="evidence" value="ECO:0007669"/>
    <property type="project" value="TreeGrafter"/>
</dbReference>
<dbReference type="GO" id="GO:0004014">
    <property type="term" value="F:adenosylmethionine decarboxylase activity"/>
    <property type="evidence" value="ECO:0007669"/>
    <property type="project" value="UniProtKB-UniRule"/>
</dbReference>
<dbReference type="GO" id="GO:0008295">
    <property type="term" value="P:spermidine biosynthetic process"/>
    <property type="evidence" value="ECO:0007669"/>
    <property type="project" value="UniProtKB-UniRule"/>
</dbReference>
<dbReference type="FunFam" id="3.60.90.10:FF:000001">
    <property type="entry name" value="S-adenosylmethionine decarboxylase proenzyme"/>
    <property type="match status" value="1"/>
</dbReference>
<dbReference type="Gene3D" id="3.60.90.10">
    <property type="entry name" value="S-adenosylmethionine decarboxylase"/>
    <property type="match status" value="1"/>
</dbReference>
<dbReference type="HAMAP" id="MF_00465">
    <property type="entry name" value="AdoMetDC_2"/>
    <property type="match status" value="1"/>
</dbReference>
<dbReference type="InterPro" id="IPR003826">
    <property type="entry name" value="AdoMetDC_fam_prok"/>
</dbReference>
<dbReference type="InterPro" id="IPR009165">
    <property type="entry name" value="S-AdoMet_deCO2ase_bac"/>
</dbReference>
<dbReference type="InterPro" id="IPR016067">
    <property type="entry name" value="S-AdoMet_deCO2ase_core"/>
</dbReference>
<dbReference type="NCBIfam" id="TIGR03331">
    <property type="entry name" value="SAM_DCase_Eco"/>
    <property type="match status" value="1"/>
</dbReference>
<dbReference type="PANTHER" id="PTHR33866">
    <property type="entry name" value="S-ADENOSYLMETHIONINE DECARBOXYLASE PROENZYME"/>
    <property type="match status" value="1"/>
</dbReference>
<dbReference type="PANTHER" id="PTHR33866:SF1">
    <property type="entry name" value="S-ADENOSYLMETHIONINE DECARBOXYLASE PROENZYME"/>
    <property type="match status" value="1"/>
</dbReference>
<dbReference type="Pfam" id="PF02675">
    <property type="entry name" value="AdoMet_dc"/>
    <property type="match status" value="1"/>
</dbReference>
<dbReference type="PIRSF" id="PIRSF001356">
    <property type="entry name" value="SAM_decarboxylas"/>
    <property type="match status" value="1"/>
</dbReference>
<dbReference type="SUPFAM" id="SSF56276">
    <property type="entry name" value="S-adenosylmethionine decarboxylase"/>
    <property type="match status" value="1"/>
</dbReference>
<accession>A7FM34</accession>
<gene>
    <name evidence="1" type="primary">speD</name>
    <name type="ordered locus">YpsIP31758_3355</name>
</gene>
<organism>
    <name type="scientific">Yersinia pseudotuberculosis serotype O:1b (strain IP 31758)</name>
    <dbReference type="NCBI Taxonomy" id="349747"/>
    <lineage>
        <taxon>Bacteria</taxon>
        <taxon>Pseudomonadati</taxon>
        <taxon>Pseudomonadota</taxon>
        <taxon>Gammaproteobacteria</taxon>
        <taxon>Enterobacterales</taxon>
        <taxon>Yersiniaceae</taxon>
        <taxon>Yersinia</taxon>
    </lineage>
</organism>
<feature type="chain" id="PRO_1000060359" description="S-adenosylmethionine decarboxylase beta chain" evidence="1">
    <location>
        <begin position="1"/>
        <end position="111"/>
    </location>
</feature>
<feature type="chain" id="PRO_1000060360" description="S-adenosylmethionine decarboxylase alpha chain" evidence="1">
    <location>
        <begin position="112"/>
        <end position="264"/>
    </location>
</feature>
<feature type="active site" description="Schiff-base intermediate with substrate; via pyruvic acid" evidence="1">
    <location>
        <position position="112"/>
    </location>
</feature>
<feature type="active site" description="Proton acceptor; for processing activity" evidence="1">
    <location>
        <position position="117"/>
    </location>
</feature>
<feature type="active site" description="Proton donor; for catalytic activity" evidence="1">
    <location>
        <position position="140"/>
    </location>
</feature>
<feature type="site" description="Cleavage (non-hydrolytic); by autolysis" evidence="1">
    <location>
        <begin position="111"/>
        <end position="112"/>
    </location>
</feature>
<feature type="modified residue" description="Pyruvic acid (Ser); by autocatalysis" evidence="1">
    <location>
        <position position="112"/>
    </location>
</feature>
<proteinExistence type="inferred from homology"/>
<reference key="1">
    <citation type="journal article" date="2007" name="PLoS Genet.">
        <title>The complete genome sequence of Yersinia pseudotuberculosis IP31758, the causative agent of Far East scarlet-like fever.</title>
        <authorList>
            <person name="Eppinger M."/>
            <person name="Rosovitz M.J."/>
            <person name="Fricke W.F."/>
            <person name="Rasko D.A."/>
            <person name="Kokorina G."/>
            <person name="Fayolle C."/>
            <person name="Lindler L.E."/>
            <person name="Carniel E."/>
            <person name="Ravel J."/>
        </authorList>
    </citation>
    <scope>NUCLEOTIDE SEQUENCE [LARGE SCALE GENOMIC DNA]</scope>
    <source>
        <strain>IP 31758</strain>
    </source>
</reference>
<evidence type="ECO:0000255" key="1">
    <source>
        <dbReference type="HAMAP-Rule" id="MF_00465"/>
    </source>
</evidence>
<protein>
    <recommendedName>
        <fullName evidence="1">S-adenosylmethionine decarboxylase proenzyme</fullName>
        <shortName evidence="1">AdoMetDC</shortName>
        <shortName evidence="1">SAMDC</shortName>
        <ecNumber evidence="1">4.1.1.50</ecNumber>
    </recommendedName>
    <component>
        <recommendedName>
            <fullName evidence="1">S-adenosylmethionine decarboxylase beta chain</fullName>
        </recommendedName>
    </component>
    <component>
        <recommendedName>
            <fullName evidence="1">S-adenosylmethionine decarboxylase alpha chain</fullName>
        </recommendedName>
    </component>
</protein>
<name>SPED_YERP3</name>